<protein>
    <recommendedName>
        <fullName>Alpha-conotoxin-like AnIC</fullName>
    </recommendedName>
</protein>
<organism>
    <name type="scientific">Conus anemone</name>
    <name type="common">Anemone cone</name>
    <dbReference type="NCBI Taxonomy" id="101285"/>
    <lineage>
        <taxon>Eukaryota</taxon>
        <taxon>Metazoa</taxon>
        <taxon>Spiralia</taxon>
        <taxon>Lophotrochozoa</taxon>
        <taxon>Mollusca</taxon>
        <taxon>Gastropoda</taxon>
        <taxon>Caenogastropoda</taxon>
        <taxon>Neogastropoda</taxon>
        <taxon>Conoidea</taxon>
        <taxon>Conidae</taxon>
        <taxon>Conus</taxon>
        <taxon>Floraconus</taxon>
    </lineage>
</organism>
<sequence>GGCCSHPACFASNPDYC</sequence>
<comment type="function">
    <text evidence="1">Alpha-conotoxins act on postsynaptic membranes, they bind to the nicotinic acetylcholine receptors (nAChR) and thus inhibit them.</text>
</comment>
<comment type="subcellular location">
    <subcellularLocation>
        <location evidence="3">Secreted</location>
    </subcellularLocation>
</comment>
<comment type="tissue specificity">
    <text evidence="5">Expressed by the venom duct.</text>
</comment>
<comment type="domain">
    <text evidence="4">The cysteine framework is I (CC-C-C). Alpha4/7 pattern.</text>
</comment>
<comment type="mass spectrometry"/>
<comment type="similarity">
    <text evidence="4">Belongs to the conotoxin A superfamily.</text>
</comment>
<keyword id="KW-0008">Acetylcholine receptor inhibiting toxin</keyword>
<keyword id="KW-0027">Amidation</keyword>
<keyword id="KW-0903">Direct protein sequencing</keyword>
<keyword id="KW-1015">Disulfide bond</keyword>
<keyword id="KW-0872">Ion channel impairing toxin</keyword>
<keyword id="KW-0528">Neurotoxin</keyword>
<keyword id="KW-0629">Postsynaptic neurotoxin</keyword>
<keyword id="KW-0964">Secreted</keyword>
<keyword id="KW-0765">Sulfation</keyword>
<keyword id="KW-0800">Toxin</keyword>
<proteinExistence type="evidence at protein level"/>
<dbReference type="ConoServer" id="17">
    <property type="toxin name" value="AnIC"/>
</dbReference>
<dbReference type="GO" id="GO:0005576">
    <property type="term" value="C:extracellular region"/>
    <property type="evidence" value="ECO:0007669"/>
    <property type="project" value="UniProtKB-SubCell"/>
</dbReference>
<dbReference type="GO" id="GO:0035792">
    <property type="term" value="C:host cell postsynaptic membrane"/>
    <property type="evidence" value="ECO:0007669"/>
    <property type="project" value="UniProtKB-KW"/>
</dbReference>
<dbReference type="GO" id="GO:0030550">
    <property type="term" value="F:acetylcholine receptor inhibitor activity"/>
    <property type="evidence" value="ECO:0007669"/>
    <property type="project" value="UniProtKB-KW"/>
</dbReference>
<dbReference type="GO" id="GO:0099106">
    <property type="term" value="F:ion channel regulator activity"/>
    <property type="evidence" value="ECO:0007669"/>
    <property type="project" value="UniProtKB-KW"/>
</dbReference>
<dbReference type="GO" id="GO:0090729">
    <property type="term" value="F:toxin activity"/>
    <property type="evidence" value="ECO:0007669"/>
    <property type="project" value="UniProtKB-KW"/>
</dbReference>
<dbReference type="InterPro" id="IPR018072">
    <property type="entry name" value="Conotoxin_a-typ_CS"/>
</dbReference>
<dbReference type="PROSITE" id="PS60014">
    <property type="entry name" value="ALPHA_CONOTOXIN"/>
    <property type="match status" value="1"/>
</dbReference>
<feature type="peptide" id="PRO_0000249782" description="Alpha-conotoxin-like AnIC">
    <location>
        <begin position="1"/>
        <end position="17"/>
    </location>
</feature>
<feature type="region of interest" description="Ser-Xaa-Pro motif, crucial for potent interaction with nAChR" evidence="2">
    <location>
        <begin position="5"/>
        <end position="7"/>
    </location>
</feature>
<feature type="modified residue" description="Sulfotyrosine" evidence="3">
    <location>
        <position position="16"/>
    </location>
</feature>
<feature type="modified residue" description="Cysteine amide" evidence="3">
    <location>
        <position position="17"/>
    </location>
</feature>
<feature type="disulfide bond" evidence="2">
    <location>
        <begin position="3"/>
        <end position="9"/>
    </location>
</feature>
<feature type="disulfide bond" evidence="2">
    <location>
        <begin position="4"/>
        <end position="17"/>
    </location>
</feature>
<accession>P0C1V8</accession>
<name>CA1C_CONAN</name>
<reference key="1">
    <citation type="journal article" date="2004" name="J. Med. Chem.">
        <title>Chemical and functional identification and characterization of novel sulfated alpha-conotoxins from the cone snail Conus anemone.</title>
        <authorList>
            <person name="Loughnan M.L."/>
            <person name="Nicke A."/>
            <person name="Jones A."/>
            <person name="Adams D.J."/>
            <person name="Alewood P.F."/>
            <person name="Lewis R.J."/>
        </authorList>
    </citation>
    <scope>PROTEIN SEQUENCE</scope>
    <scope>SULFATION AT TYR-16</scope>
    <scope>AMIDATION AT CYS-17</scope>
    <scope>MASS SPECTROMETRY</scope>
    <scope>SUBCELLULAR LOCATION</scope>
    <source>
        <tissue>Venom</tissue>
    </source>
</reference>
<evidence type="ECO:0000250" key="1"/>
<evidence type="ECO:0000250" key="2">
    <source>
        <dbReference type="UniProtKB" id="P56636"/>
    </source>
</evidence>
<evidence type="ECO:0000269" key="3">
    <source>
    </source>
</evidence>
<evidence type="ECO:0000305" key="4"/>
<evidence type="ECO:0000305" key="5">
    <source>
    </source>
</evidence>